<name>DYP_EXIGL</name>
<accession>I2DBY2</accession>
<accession>P86836</accession>
<protein>
    <recommendedName>
        <fullName evidence="5">Dye-decolorizing peroxidase</fullName>
        <shortName evidence="5">EglDyP</shortName>
        <ecNumber evidence="4">1.11.1.19</ecNumber>
        <ecNumber evidence="4">1.11.1.7</ecNumber>
    </recommendedName>
</protein>
<proteinExistence type="evidence at protein level"/>
<keyword id="KW-0903">Direct protein sequencing</keyword>
<keyword id="KW-0325">Glycoprotein</keyword>
<keyword id="KW-0349">Heme</keyword>
<keyword id="KW-0408">Iron</keyword>
<keyword id="KW-0479">Metal-binding</keyword>
<keyword id="KW-0560">Oxidoreductase</keyword>
<keyword id="KW-0575">Peroxidase</keyword>
<keyword id="KW-0964">Secreted</keyword>
<keyword id="KW-0732">Signal</keyword>
<organism evidence="8">
    <name type="scientific">Exidia glandulosa</name>
    <name type="common">Black witch's butter</name>
    <dbReference type="NCBI Taxonomy" id="5219"/>
    <lineage>
        <taxon>Eukaryota</taxon>
        <taxon>Fungi</taxon>
        <taxon>Dikarya</taxon>
        <taxon>Basidiomycota</taxon>
        <taxon>Agaricomycotina</taxon>
        <taxon>Agaricomycetes</taxon>
        <taxon>Auriculariales</taxon>
        <taxon>Exidiaceae</taxon>
        <taxon>Exidia</taxon>
    </lineage>
</organism>
<reference evidence="8" key="1">
    <citation type="journal article" date="2013" name="Appl. Microbiol. Biotechnol.">
        <title>Substrate oxidation by dye-decolorizing peroxidases (DyPs) from wood- and litter-degrading agaricomycetes compared to other fungal and plant heme-peroxidases.</title>
        <authorList>
            <person name="Liers C."/>
            <person name="Pecyna M.J."/>
            <person name="Kellner H."/>
            <person name="Worrich A."/>
            <person name="Zorn H."/>
            <person name="Steffen K.T."/>
            <person name="Hofrichter M."/>
            <person name="Ullrich R."/>
        </authorList>
    </citation>
    <scope>NUCLEOTIDE SEQUENCE [MRNA]</scope>
    <scope>PROTEIN SEQUENCE OF 61-71; 252-279; 321-342; 376-385 AND 442-482</scope>
    <scope>FUNCTION</scope>
    <scope>CATALYTIC ACTIVITY</scope>
    <scope>BIOPHYSICOCHEMICAL PROPERTIES</scope>
    <source>
        <strain evidence="8">DSMZ 1012</strain>
    </source>
</reference>
<evidence type="ECO:0000250" key="1">
    <source>
        <dbReference type="UniProtKB" id="I2DBY1"/>
    </source>
</evidence>
<evidence type="ECO:0000255" key="2"/>
<evidence type="ECO:0000255" key="3">
    <source>
        <dbReference type="PROSITE-ProRule" id="PRU00498"/>
    </source>
</evidence>
<evidence type="ECO:0000269" key="4">
    <source>
    </source>
</evidence>
<evidence type="ECO:0000303" key="5">
    <source>
    </source>
</evidence>
<evidence type="ECO:0000305" key="6"/>
<evidence type="ECO:0000305" key="7">
    <source>
    </source>
</evidence>
<evidence type="ECO:0000312" key="8">
    <source>
        <dbReference type="EMBL" id="AFJ79724.1"/>
    </source>
</evidence>
<comment type="function">
    <text evidence="4">Manganese-independent peroxidase that is able to convert a large number of compounds, but its physiological substrate is not known. In addition to classic peroxidase substrates (e.g. 2,6-dimethoxyphenol), oxidizes dyes such as Reactive Blue 5 and Reactive Black 5.</text>
</comment>
<comment type="catalytic activity">
    <reaction evidence="4">
        <text>Reactive Blue 5 + 2 H2O2 = 2,2'-disulfonyl azobenzene + 3-[(4-amino-6-chloro-1,3,5-triazin-2-yl)amino]benzenesulfonate + phthalate + 2 H2O + 2 H(+)</text>
        <dbReference type="Rhea" id="RHEA:28086"/>
        <dbReference type="ChEBI" id="CHEBI:15377"/>
        <dbReference type="ChEBI" id="CHEBI:15378"/>
        <dbReference type="ChEBI" id="CHEBI:16240"/>
        <dbReference type="ChEBI" id="CHEBI:17563"/>
        <dbReference type="ChEBI" id="CHEBI:63950"/>
        <dbReference type="ChEBI" id="CHEBI:63955"/>
        <dbReference type="ChEBI" id="CHEBI:64278"/>
        <dbReference type="EC" id="1.11.1.19"/>
    </reaction>
</comment>
<comment type="catalytic activity">
    <reaction evidence="4">
        <text>2 a phenolic donor + H2O2 = 2 a phenolic radical donor + 2 H2O</text>
        <dbReference type="Rhea" id="RHEA:56136"/>
        <dbReference type="ChEBI" id="CHEBI:15377"/>
        <dbReference type="ChEBI" id="CHEBI:16240"/>
        <dbReference type="ChEBI" id="CHEBI:139520"/>
        <dbReference type="ChEBI" id="CHEBI:139521"/>
        <dbReference type="EC" id="1.11.1.7"/>
    </reaction>
</comment>
<comment type="cofactor">
    <cofactor evidence="1">
        <name>heme b</name>
        <dbReference type="ChEBI" id="CHEBI:60344"/>
    </cofactor>
    <text evidence="1">Binds 1 heme b (iron(II)-protoporphyrin IX) group non-covalently.</text>
</comment>
<comment type="biophysicochemical properties">
    <absorption>
        <max evidence="4">405 nm</max>
    </absorption>
    <kinetics>
        <KM evidence="4">14 uM for H(2)O(2)</KM>
    </kinetics>
    <phDependence>
        <text evidence="4">Optimum pH is 4.5 with 2,6-dimethoxyphenol as substrate. Retains more than 50% of its activity after 4 hours at pH 2.5.</text>
    </phDependence>
    <temperatureDependence>
        <text evidence="4">Thermostable. Retains 50%-90% of its activity after heating for 2 hours at 60 degrees Celsius, while no decrease in activity is observed within the same time at 30 or 40 degrees Celsius.</text>
    </temperatureDependence>
</comment>
<comment type="subcellular location">
    <subcellularLocation>
        <location evidence="7">Secreted</location>
    </subcellularLocation>
</comment>
<comment type="similarity">
    <text evidence="6">Belongs to the DyP-type peroxidase family.</text>
</comment>
<sequence>MRLSPSFLSLALVIFVGEVVARNVVARASNPASVTGTRKVSLLKNVAGLPAVPTAQQVAVSSLNTDDIQGDILVGMHKQQQRFYFFTINDAATFKTHLAADIAPVVASVTQLSSVSTQPLVALNIAFSQTGLNALGVTDNVGDALFTAGQASNTVGNLKETTDNWVAQFKTPGIHGVILLASDDKSLIDQQEASIQSTFGAAISKVYSLDGAIRPGAEAGHEMFGFLDGIAQPAISGLGTPLPGQLVVDEGVIIVGGTNDPIARPADGWMTGGSFLAFRQLEQLVPEFNKYLLDNAPAVDGKSLQDRADLLGARMVGRWKSGAPIDLTPLADDPALGADPQRNNNFDFTHANFSITTDQTHCPFSAHIRKTRPRADLVAPANSIIRSGIPYGSEVSAAEAAANATTNERGLAFVSYQSQLNKGFQFLQNTWANNPGFIFGKNVQPGQDPIIGQNSGAIRSVVGLDPANPTGALSMGQFVVSRGGEYFFSPPISALTGKLAA</sequence>
<feature type="signal peptide" evidence="2">
    <location>
        <begin position="1"/>
        <end position="21"/>
    </location>
</feature>
<feature type="propeptide" id="PRO_0000444025" evidence="7">
    <location>
        <begin position="22"/>
        <end position="60"/>
    </location>
</feature>
<feature type="chain" id="PRO_5003657273" description="Dye-decolorizing peroxidase" evidence="7">
    <location>
        <begin position="61"/>
        <end position="501"/>
    </location>
</feature>
<feature type="active site" description="Proton acceptor" evidence="1">
    <location>
        <position position="228"/>
    </location>
</feature>
<feature type="binding site" description="axial binding residue" evidence="1">
    <location>
        <position position="367"/>
    </location>
    <ligand>
        <name>heme</name>
        <dbReference type="ChEBI" id="CHEBI:30413"/>
    </ligand>
    <ligandPart>
        <name>Fe</name>
        <dbReference type="ChEBI" id="CHEBI:18248"/>
    </ligandPart>
</feature>
<feature type="glycosylation site" description="N-linked (GlcNAc...) asparagine" evidence="3">
    <location>
        <position position="352"/>
    </location>
</feature>
<feature type="glycosylation site" description="N-linked (GlcNAc...) asparagine" evidence="3">
    <location>
        <position position="403"/>
    </location>
</feature>
<gene>
    <name evidence="8" type="primary">dyp1</name>
</gene>
<dbReference type="EC" id="1.11.1.19" evidence="4"/>
<dbReference type="EC" id="1.11.1.7" evidence="4"/>
<dbReference type="EMBL" id="JQ650251">
    <property type="protein sequence ID" value="AFJ79724.1"/>
    <property type="molecule type" value="mRNA"/>
</dbReference>
<dbReference type="SMR" id="I2DBY2"/>
<dbReference type="GlyCosmos" id="I2DBY2">
    <property type="glycosylation" value="2 sites, No reported glycans"/>
</dbReference>
<dbReference type="BRENDA" id="1.11.1.19">
    <property type="organism ID" value="15117"/>
</dbReference>
<dbReference type="GO" id="GO:0005829">
    <property type="term" value="C:cytosol"/>
    <property type="evidence" value="ECO:0007669"/>
    <property type="project" value="TreeGrafter"/>
</dbReference>
<dbReference type="GO" id="GO:0005576">
    <property type="term" value="C:extracellular region"/>
    <property type="evidence" value="ECO:0007669"/>
    <property type="project" value="UniProtKB-SubCell"/>
</dbReference>
<dbReference type="GO" id="GO:0020037">
    <property type="term" value="F:heme binding"/>
    <property type="evidence" value="ECO:0007669"/>
    <property type="project" value="InterPro"/>
</dbReference>
<dbReference type="GO" id="GO:0140825">
    <property type="term" value="F:lactoperoxidase activity"/>
    <property type="evidence" value="ECO:0007669"/>
    <property type="project" value="UniProtKB-EC"/>
</dbReference>
<dbReference type="GO" id="GO:0046872">
    <property type="term" value="F:metal ion binding"/>
    <property type="evidence" value="ECO:0007669"/>
    <property type="project" value="UniProtKB-KW"/>
</dbReference>
<dbReference type="GO" id="GO:0004601">
    <property type="term" value="F:peroxidase activity"/>
    <property type="evidence" value="ECO:0000314"/>
    <property type="project" value="UniProtKB"/>
</dbReference>
<dbReference type="InterPro" id="IPR011008">
    <property type="entry name" value="Dimeric_a/b-barrel"/>
</dbReference>
<dbReference type="InterPro" id="IPR049509">
    <property type="entry name" value="DyP_N"/>
</dbReference>
<dbReference type="InterPro" id="IPR048328">
    <property type="entry name" value="Dyp_perox_C"/>
</dbReference>
<dbReference type="InterPro" id="IPR006314">
    <property type="entry name" value="Dyp_peroxidase"/>
</dbReference>
<dbReference type="NCBIfam" id="TIGR01413">
    <property type="entry name" value="Dyp_perox_fam"/>
    <property type="match status" value="1"/>
</dbReference>
<dbReference type="PANTHER" id="PTHR30521:SF4">
    <property type="entry name" value="DEFERROCHELATASE"/>
    <property type="match status" value="1"/>
</dbReference>
<dbReference type="PANTHER" id="PTHR30521">
    <property type="entry name" value="DEFERROCHELATASE/PEROXIDASE"/>
    <property type="match status" value="1"/>
</dbReference>
<dbReference type="Pfam" id="PF21105">
    <property type="entry name" value="DyP_N"/>
    <property type="match status" value="1"/>
</dbReference>
<dbReference type="Pfam" id="PF20628">
    <property type="entry name" value="Dyp_perox_C"/>
    <property type="match status" value="1"/>
</dbReference>
<dbReference type="SUPFAM" id="SSF54909">
    <property type="entry name" value="Dimeric alpha+beta barrel"/>
    <property type="match status" value="1"/>
</dbReference>
<dbReference type="PROSITE" id="PS51404">
    <property type="entry name" value="DYP_PEROXIDASE"/>
    <property type="match status" value="1"/>
</dbReference>